<keyword id="KW-0255">Endonuclease</keyword>
<keyword id="KW-0378">Hydrolase</keyword>
<keyword id="KW-0540">Nuclease</keyword>
<keyword id="KW-1185">Reference proteome</keyword>
<keyword id="KW-0694">RNA-binding</keyword>
<keyword id="KW-0819">tRNA processing</keyword>
<comment type="function">
    <text evidence="1">RNaseP catalyzes the removal of the 5'-leader sequence from pre-tRNA to produce the mature 5'-terminus. It can also cleave other RNA substrates such as 4.5S RNA. The protein component plays an auxiliary but essential role in vivo by binding to the 5'-leader sequence and broadening the substrate specificity of the ribozyme.</text>
</comment>
<comment type="catalytic activity">
    <reaction evidence="1">
        <text>Endonucleolytic cleavage of RNA, removing 5'-extranucleotides from tRNA precursor.</text>
        <dbReference type="EC" id="3.1.26.5"/>
    </reaction>
</comment>
<comment type="subunit">
    <text evidence="1">Consists of a catalytic RNA component (M1 or rnpB) and a protein subunit.</text>
</comment>
<comment type="similarity">
    <text evidence="1">Belongs to the RnpA family.</text>
</comment>
<sequence>MLSACNRMRRSSEFDATVKFGLRAVQSDVIIHVWRGCNRDETKAPHVGLIIAKTVGSAVERHRVARRLRHVARTMLGELGGADQVVIRALPSSRNVSSAWLAQQLRNGLRCALDLAETDW</sequence>
<reference key="1">
    <citation type="journal article" date="1996" name="Microbiology">
        <title>Gene arrangement and organization in an approximately 76 kb fragment encompassing the oriC region of the chromosome of Mycobacterium leprae.</title>
        <authorList>
            <person name="Fsihi H."/>
            <person name="de Rossi E."/>
            <person name="Salazar L."/>
            <person name="Cantoni R."/>
            <person name="Labo M."/>
            <person name="Riccardi G."/>
            <person name="Takiff H.E."/>
            <person name="Eiglmeier K."/>
            <person name="Bergh S."/>
            <person name="Cole S.T."/>
        </authorList>
    </citation>
    <scope>NUCLEOTIDE SEQUENCE [GENOMIC DNA]</scope>
</reference>
<reference key="2">
    <citation type="journal article" date="2001" name="Nature">
        <title>Massive gene decay in the leprosy bacillus.</title>
        <authorList>
            <person name="Cole S.T."/>
            <person name="Eiglmeier K."/>
            <person name="Parkhill J."/>
            <person name="James K.D."/>
            <person name="Thomson N.R."/>
            <person name="Wheeler P.R."/>
            <person name="Honore N."/>
            <person name="Garnier T."/>
            <person name="Churcher C.M."/>
            <person name="Harris D.E."/>
            <person name="Mungall K.L."/>
            <person name="Basham D."/>
            <person name="Brown D."/>
            <person name="Chillingworth T."/>
            <person name="Connor R."/>
            <person name="Davies R.M."/>
            <person name="Devlin K."/>
            <person name="Duthoy S."/>
            <person name="Feltwell T."/>
            <person name="Fraser A."/>
            <person name="Hamlin N."/>
            <person name="Holroyd S."/>
            <person name="Hornsby T."/>
            <person name="Jagels K."/>
            <person name="Lacroix C."/>
            <person name="Maclean J."/>
            <person name="Moule S."/>
            <person name="Murphy L.D."/>
            <person name="Oliver K."/>
            <person name="Quail M.A."/>
            <person name="Rajandream M.A."/>
            <person name="Rutherford K.M."/>
            <person name="Rutter S."/>
            <person name="Seeger K."/>
            <person name="Simon S."/>
            <person name="Simmonds M."/>
            <person name="Skelton J."/>
            <person name="Squares R."/>
            <person name="Squares S."/>
            <person name="Stevens K."/>
            <person name="Taylor K."/>
            <person name="Whitehead S."/>
            <person name="Woodward J.R."/>
            <person name="Barrell B.G."/>
        </authorList>
    </citation>
    <scope>NUCLEOTIDE SEQUENCE [LARGE SCALE GENOMIC DNA]</scope>
    <source>
        <strain>TN</strain>
    </source>
</reference>
<feature type="chain" id="PRO_0000198487" description="Ribonuclease P protein component">
    <location>
        <begin position="1"/>
        <end position="120"/>
    </location>
</feature>
<dbReference type="EC" id="3.1.26.5" evidence="1"/>
<dbReference type="EMBL" id="L39923">
    <property type="protein sequence ID" value="AAB53139.1"/>
    <property type="molecule type" value="Genomic_DNA"/>
</dbReference>
<dbReference type="EMBL" id="AL583926">
    <property type="protein sequence ID" value="CAC32244.1"/>
    <property type="molecule type" value="Genomic_DNA"/>
</dbReference>
<dbReference type="PIR" id="F87248">
    <property type="entry name" value="F87248"/>
</dbReference>
<dbReference type="RefSeq" id="NP_302732.1">
    <property type="nucleotide sequence ID" value="NC_002677.1"/>
</dbReference>
<dbReference type="RefSeq" id="WP_010909050.1">
    <property type="nucleotide sequence ID" value="NC_002677.1"/>
</dbReference>
<dbReference type="SMR" id="P46610"/>
<dbReference type="STRING" id="272631.gene:17576578"/>
<dbReference type="KEGG" id="mle:ML2712"/>
<dbReference type="PATRIC" id="fig|272631.5.peg.5214"/>
<dbReference type="Leproma" id="ML2712"/>
<dbReference type="eggNOG" id="COG0594">
    <property type="taxonomic scope" value="Bacteria"/>
</dbReference>
<dbReference type="HOGENOM" id="CLU_117179_4_1_11"/>
<dbReference type="OrthoDB" id="196964at2"/>
<dbReference type="Proteomes" id="UP000000806">
    <property type="component" value="Chromosome"/>
</dbReference>
<dbReference type="GO" id="GO:0030677">
    <property type="term" value="C:ribonuclease P complex"/>
    <property type="evidence" value="ECO:0007669"/>
    <property type="project" value="TreeGrafter"/>
</dbReference>
<dbReference type="GO" id="GO:0042781">
    <property type="term" value="F:3'-tRNA processing endoribonuclease activity"/>
    <property type="evidence" value="ECO:0007669"/>
    <property type="project" value="TreeGrafter"/>
</dbReference>
<dbReference type="GO" id="GO:0004526">
    <property type="term" value="F:ribonuclease P activity"/>
    <property type="evidence" value="ECO:0007669"/>
    <property type="project" value="UniProtKB-UniRule"/>
</dbReference>
<dbReference type="GO" id="GO:0000049">
    <property type="term" value="F:tRNA binding"/>
    <property type="evidence" value="ECO:0007669"/>
    <property type="project" value="UniProtKB-UniRule"/>
</dbReference>
<dbReference type="GO" id="GO:0001682">
    <property type="term" value="P:tRNA 5'-leader removal"/>
    <property type="evidence" value="ECO:0007669"/>
    <property type="project" value="UniProtKB-UniRule"/>
</dbReference>
<dbReference type="Gene3D" id="3.30.230.10">
    <property type="match status" value="1"/>
</dbReference>
<dbReference type="HAMAP" id="MF_00227">
    <property type="entry name" value="RNase_P"/>
    <property type="match status" value="1"/>
</dbReference>
<dbReference type="InterPro" id="IPR020568">
    <property type="entry name" value="Ribosomal_Su5_D2-typ_SF"/>
</dbReference>
<dbReference type="InterPro" id="IPR014721">
    <property type="entry name" value="Ribsml_uS5_D2-typ_fold_subgr"/>
</dbReference>
<dbReference type="InterPro" id="IPR000100">
    <property type="entry name" value="RNase_P"/>
</dbReference>
<dbReference type="InterPro" id="IPR020539">
    <property type="entry name" value="RNase_P_CS"/>
</dbReference>
<dbReference type="NCBIfam" id="TIGR00188">
    <property type="entry name" value="rnpA"/>
    <property type="match status" value="1"/>
</dbReference>
<dbReference type="PANTHER" id="PTHR33992">
    <property type="entry name" value="RIBONUCLEASE P PROTEIN COMPONENT"/>
    <property type="match status" value="1"/>
</dbReference>
<dbReference type="PANTHER" id="PTHR33992:SF1">
    <property type="entry name" value="RIBONUCLEASE P PROTEIN COMPONENT"/>
    <property type="match status" value="1"/>
</dbReference>
<dbReference type="Pfam" id="PF00825">
    <property type="entry name" value="Ribonuclease_P"/>
    <property type="match status" value="1"/>
</dbReference>
<dbReference type="SUPFAM" id="SSF54211">
    <property type="entry name" value="Ribosomal protein S5 domain 2-like"/>
    <property type="match status" value="1"/>
</dbReference>
<dbReference type="PROSITE" id="PS00648">
    <property type="entry name" value="RIBONUCLEASE_P"/>
    <property type="match status" value="1"/>
</dbReference>
<accession>P46610</accession>
<proteinExistence type="inferred from homology"/>
<protein>
    <recommendedName>
        <fullName evidence="1">Ribonuclease P protein component</fullName>
        <shortName evidence="1">RNase P protein</shortName>
        <shortName evidence="1">RNaseP protein</shortName>
        <ecNumber evidence="1">3.1.26.5</ecNumber>
    </recommendedName>
    <alternativeName>
        <fullName evidence="1">Protein C5</fullName>
    </alternativeName>
</protein>
<name>RNPA_MYCLE</name>
<organism>
    <name type="scientific">Mycobacterium leprae (strain TN)</name>
    <dbReference type="NCBI Taxonomy" id="272631"/>
    <lineage>
        <taxon>Bacteria</taxon>
        <taxon>Bacillati</taxon>
        <taxon>Actinomycetota</taxon>
        <taxon>Actinomycetes</taxon>
        <taxon>Mycobacteriales</taxon>
        <taxon>Mycobacteriaceae</taxon>
        <taxon>Mycobacterium</taxon>
    </lineage>
</organism>
<gene>
    <name evidence="1" type="primary">rnpA</name>
    <name type="ordered locus">ML2712</name>
</gene>
<evidence type="ECO:0000255" key="1">
    <source>
        <dbReference type="HAMAP-Rule" id="MF_00227"/>
    </source>
</evidence>